<organism>
    <name type="scientific">Brucella abortus (strain S19)</name>
    <dbReference type="NCBI Taxonomy" id="430066"/>
    <lineage>
        <taxon>Bacteria</taxon>
        <taxon>Pseudomonadati</taxon>
        <taxon>Pseudomonadota</taxon>
        <taxon>Alphaproteobacteria</taxon>
        <taxon>Hyphomicrobiales</taxon>
        <taxon>Brucellaceae</taxon>
        <taxon>Brucella/Ochrobactrum group</taxon>
        <taxon>Brucella</taxon>
    </lineage>
</organism>
<keyword id="KW-0963">Cytoplasm</keyword>
<keyword id="KW-0312">Gluconeogenesis</keyword>
<keyword id="KW-0324">Glycolysis</keyword>
<keyword id="KW-0413">Isomerase</keyword>
<name>G6PI_BRUA1</name>
<protein>
    <recommendedName>
        <fullName evidence="1">Glucose-6-phosphate isomerase</fullName>
        <shortName evidence="1">GPI</shortName>
        <ecNumber evidence="1">5.3.1.9</ecNumber>
    </recommendedName>
    <alternativeName>
        <fullName evidence="1">Phosphoglucose isomerase</fullName>
        <shortName evidence="1">PGI</shortName>
    </alternativeName>
    <alternativeName>
        <fullName evidence="1">Phosphohexose isomerase</fullName>
        <shortName evidence="1">PHI</shortName>
    </alternativeName>
</protein>
<accession>B2S928</accession>
<evidence type="ECO:0000255" key="1">
    <source>
        <dbReference type="HAMAP-Rule" id="MF_00473"/>
    </source>
</evidence>
<proteinExistence type="inferred from homology"/>
<sequence length="549" mass="59642">MARDATKLEATVAKLKKHWAESAPRDMRAAFSTDPGRFGRYSLCLDDLLFDWSKCRVNDETMALLKELAVAADVEGRRAAMFAGEHINNTEDRAVLHVALRDTSSKEVLVDGHNVLPDVKHVLDRMAAFADGIRSGALKGATGRKITDIVNIGIGGSDLGPVMATLALAPYHDEPRAHFVSNIDGAHIADTLSPLDPASTLIIVASKTFTTIETMTNAQTARKWVADTLGEAAVGAHFAAVSTALDKVAAFGIPEDRVFGFWDWVGGRYSVWSAIGLPVMIAVGPDNFRKFLAGAHAMDVHFRDAPLEKNLPVMLGLIGYWHRAICGYGSRAIIPYDQRLSRLPAYLQQLDMESNGKSVTLDGKPVSGPTGPVVWGEPGTNGQHAFFQLLHQGTDTIPLEFIVAAKGHEPTLDHQHEMLMANCLAQSEALMKGRTLDEARAQLQAKNLPASQVERIAPHRVFSGNRPSLTLIHDMLDPYALGRLIALYEHRVFVEAQIFGINAFDQWGVELGKELATELLPVVSGKEGASGRDASTQGLVAHLHARRKA</sequence>
<dbReference type="EC" id="5.3.1.9" evidence="1"/>
<dbReference type="EMBL" id="CP000887">
    <property type="protein sequence ID" value="ACD71827.1"/>
    <property type="molecule type" value="Genomic_DNA"/>
</dbReference>
<dbReference type="RefSeq" id="WP_002963449.1">
    <property type="nucleotide sequence ID" value="NC_010742.1"/>
</dbReference>
<dbReference type="SMR" id="B2S928"/>
<dbReference type="GeneID" id="93017245"/>
<dbReference type="KEGG" id="bmc:BAbS19_I02860"/>
<dbReference type="HOGENOM" id="CLU_017947_3_1_5"/>
<dbReference type="UniPathway" id="UPA00109">
    <property type="reaction ID" value="UER00181"/>
</dbReference>
<dbReference type="UniPathway" id="UPA00138"/>
<dbReference type="Proteomes" id="UP000002565">
    <property type="component" value="Chromosome 1"/>
</dbReference>
<dbReference type="GO" id="GO:0005829">
    <property type="term" value="C:cytosol"/>
    <property type="evidence" value="ECO:0007669"/>
    <property type="project" value="TreeGrafter"/>
</dbReference>
<dbReference type="GO" id="GO:0097367">
    <property type="term" value="F:carbohydrate derivative binding"/>
    <property type="evidence" value="ECO:0007669"/>
    <property type="project" value="InterPro"/>
</dbReference>
<dbReference type="GO" id="GO:0004347">
    <property type="term" value="F:glucose-6-phosphate isomerase activity"/>
    <property type="evidence" value="ECO:0007669"/>
    <property type="project" value="UniProtKB-UniRule"/>
</dbReference>
<dbReference type="GO" id="GO:0048029">
    <property type="term" value="F:monosaccharide binding"/>
    <property type="evidence" value="ECO:0007669"/>
    <property type="project" value="TreeGrafter"/>
</dbReference>
<dbReference type="GO" id="GO:0006094">
    <property type="term" value="P:gluconeogenesis"/>
    <property type="evidence" value="ECO:0007669"/>
    <property type="project" value="UniProtKB-UniRule"/>
</dbReference>
<dbReference type="GO" id="GO:0051156">
    <property type="term" value="P:glucose 6-phosphate metabolic process"/>
    <property type="evidence" value="ECO:0007669"/>
    <property type="project" value="TreeGrafter"/>
</dbReference>
<dbReference type="GO" id="GO:0006096">
    <property type="term" value="P:glycolytic process"/>
    <property type="evidence" value="ECO:0007669"/>
    <property type="project" value="UniProtKB-UniRule"/>
</dbReference>
<dbReference type="CDD" id="cd05015">
    <property type="entry name" value="SIS_PGI_1"/>
    <property type="match status" value="1"/>
</dbReference>
<dbReference type="CDD" id="cd05016">
    <property type="entry name" value="SIS_PGI_2"/>
    <property type="match status" value="1"/>
</dbReference>
<dbReference type="FunFam" id="3.40.50.10490:FF:000018">
    <property type="entry name" value="Glucose-6-phosphate isomerase"/>
    <property type="match status" value="1"/>
</dbReference>
<dbReference type="Gene3D" id="1.10.1390.10">
    <property type="match status" value="1"/>
</dbReference>
<dbReference type="Gene3D" id="3.40.50.10490">
    <property type="entry name" value="Glucose-6-phosphate isomerase like protein, domain 1"/>
    <property type="match status" value="2"/>
</dbReference>
<dbReference type="HAMAP" id="MF_00473">
    <property type="entry name" value="G6P_isomerase"/>
    <property type="match status" value="1"/>
</dbReference>
<dbReference type="InterPro" id="IPR001672">
    <property type="entry name" value="G6P_Isomerase"/>
</dbReference>
<dbReference type="InterPro" id="IPR023096">
    <property type="entry name" value="G6P_Isomerase_C"/>
</dbReference>
<dbReference type="InterPro" id="IPR018189">
    <property type="entry name" value="Phosphoglucose_isomerase_CS"/>
</dbReference>
<dbReference type="InterPro" id="IPR046348">
    <property type="entry name" value="SIS_dom_sf"/>
</dbReference>
<dbReference type="InterPro" id="IPR035476">
    <property type="entry name" value="SIS_PGI_1"/>
</dbReference>
<dbReference type="InterPro" id="IPR035482">
    <property type="entry name" value="SIS_PGI_2"/>
</dbReference>
<dbReference type="NCBIfam" id="NF001211">
    <property type="entry name" value="PRK00179.1"/>
    <property type="match status" value="1"/>
</dbReference>
<dbReference type="PANTHER" id="PTHR11469">
    <property type="entry name" value="GLUCOSE-6-PHOSPHATE ISOMERASE"/>
    <property type="match status" value="1"/>
</dbReference>
<dbReference type="PANTHER" id="PTHR11469:SF1">
    <property type="entry name" value="GLUCOSE-6-PHOSPHATE ISOMERASE"/>
    <property type="match status" value="1"/>
</dbReference>
<dbReference type="Pfam" id="PF00342">
    <property type="entry name" value="PGI"/>
    <property type="match status" value="1"/>
</dbReference>
<dbReference type="PRINTS" id="PR00662">
    <property type="entry name" value="G6PISOMERASE"/>
</dbReference>
<dbReference type="SUPFAM" id="SSF53697">
    <property type="entry name" value="SIS domain"/>
    <property type="match status" value="1"/>
</dbReference>
<dbReference type="PROSITE" id="PS00765">
    <property type="entry name" value="P_GLUCOSE_ISOMERASE_1"/>
    <property type="match status" value="1"/>
</dbReference>
<dbReference type="PROSITE" id="PS00174">
    <property type="entry name" value="P_GLUCOSE_ISOMERASE_2"/>
    <property type="match status" value="1"/>
</dbReference>
<dbReference type="PROSITE" id="PS51463">
    <property type="entry name" value="P_GLUCOSE_ISOMERASE_3"/>
    <property type="match status" value="1"/>
</dbReference>
<gene>
    <name evidence="1" type="primary">pgi</name>
    <name type="ordered locus">BAbS19_I02860</name>
</gene>
<feature type="chain" id="PRO_1000125698" description="Glucose-6-phosphate isomerase">
    <location>
        <begin position="1"/>
        <end position="549"/>
    </location>
</feature>
<feature type="active site" description="Proton donor" evidence="1">
    <location>
        <position position="353"/>
    </location>
</feature>
<feature type="active site" evidence="1">
    <location>
        <position position="384"/>
    </location>
</feature>
<feature type="active site" evidence="1">
    <location>
        <position position="513"/>
    </location>
</feature>
<reference key="1">
    <citation type="journal article" date="2008" name="PLoS ONE">
        <title>Genome sequence of Brucella abortus vaccine strain S19 compared to virulent strains yields candidate virulence genes.</title>
        <authorList>
            <person name="Crasta O.R."/>
            <person name="Folkerts O."/>
            <person name="Fei Z."/>
            <person name="Mane S.P."/>
            <person name="Evans C."/>
            <person name="Martino-Catt S."/>
            <person name="Bricker B."/>
            <person name="Yu G."/>
            <person name="Du L."/>
            <person name="Sobral B.W."/>
        </authorList>
    </citation>
    <scope>NUCLEOTIDE SEQUENCE [LARGE SCALE GENOMIC DNA]</scope>
    <source>
        <strain>S19</strain>
    </source>
</reference>
<comment type="function">
    <text evidence="1">Catalyzes the reversible isomerization of glucose-6-phosphate to fructose-6-phosphate.</text>
</comment>
<comment type="catalytic activity">
    <reaction evidence="1">
        <text>alpha-D-glucose 6-phosphate = beta-D-fructose 6-phosphate</text>
        <dbReference type="Rhea" id="RHEA:11816"/>
        <dbReference type="ChEBI" id="CHEBI:57634"/>
        <dbReference type="ChEBI" id="CHEBI:58225"/>
        <dbReference type="EC" id="5.3.1.9"/>
    </reaction>
</comment>
<comment type="pathway">
    <text evidence="1">Carbohydrate biosynthesis; gluconeogenesis.</text>
</comment>
<comment type="pathway">
    <text evidence="1">Carbohydrate degradation; glycolysis; D-glyceraldehyde 3-phosphate and glycerone phosphate from D-glucose: step 2/4.</text>
</comment>
<comment type="subcellular location">
    <subcellularLocation>
        <location evidence="1">Cytoplasm</location>
    </subcellularLocation>
</comment>
<comment type="similarity">
    <text evidence="1">Belongs to the GPI family.</text>
</comment>